<evidence type="ECO:0000255" key="1">
    <source>
        <dbReference type="HAMAP-Rule" id="MF_01345"/>
    </source>
</evidence>
<evidence type="ECO:0000305" key="2"/>
<accession>Q4A5D0</accession>
<name>RS17_MYCS5</name>
<organism>
    <name type="scientific">Mycoplasmopsis synoviae (strain 53)</name>
    <name type="common">Mycoplasma synoviae</name>
    <dbReference type="NCBI Taxonomy" id="262723"/>
    <lineage>
        <taxon>Bacteria</taxon>
        <taxon>Bacillati</taxon>
        <taxon>Mycoplasmatota</taxon>
        <taxon>Mycoplasmoidales</taxon>
        <taxon>Metamycoplasmataceae</taxon>
        <taxon>Mycoplasmopsis</taxon>
    </lineage>
</organism>
<comment type="function">
    <text evidence="1">One of the primary rRNA binding proteins, it binds specifically to the 5'-end of 16S ribosomal RNA.</text>
</comment>
<comment type="subunit">
    <text evidence="1">Part of the 30S ribosomal subunit.</text>
</comment>
<comment type="similarity">
    <text evidence="1">Belongs to the universal ribosomal protein uS17 family.</text>
</comment>
<dbReference type="EMBL" id="AE017245">
    <property type="protein sequence ID" value="AAZ44041.2"/>
    <property type="molecule type" value="Genomic_DNA"/>
</dbReference>
<dbReference type="RefSeq" id="WP_020003148.1">
    <property type="nucleotide sequence ID" value="NC_007294.1"/>
</dbReference>
<dbReference type="SMR" id="Q4A5D0"/>
<dbReference type="STRING" id="262723.MS53_0634"/>
<dbReference type="GeneID" id="93530424"/>
<dbReference type="KEGG" id="msy:MS53_0634"/>
<dbReference type="eggNOG" id="COG0186">
    <property type="taxonomic scope" value="Bacteria"/>
</dbReference>
<dbReference type="HOGENOM" id="CLU_073626_1_0_14"/>
<dbReference type="OrthoDB" id="9811714at2"/>
<dbReference type="Proteomes" id="UP000000549">
    <property type="component" value="Chromosome"/>
</dbReference>
<dbReference type="GO" id="GO:0022627">
    <property type="term" value="C:cytosolic small ribosomal subunit"/>
    <property type="evidence" value="ECO:0007669"/>
    <property type="project" value="TreeGrafter"/>
</dbReference>
<dbReference type="GO" id="GO:0019843">
    <property type="term" value="F:rRNA binding"/>
    <property type="evidence" value="ECO:0007669"/>
    <property type="project" value="UniProtKB-UniRule"/>
</dbReference>
<dbReference type="GO" id="GO:0003735">
    <property type="term" value="F:structural constituent of ribosome"/>
    <property type="evidence" value="ECO:0007669"/>
    <property type="project" value="InterPro"/>
</dbReference>
<dbReference type="GO" id="GO:0006412">
    <property type="term" value="P:translation"/>
    <property type="evidence" value="ECO:0007669"/>
    <property type="project" value="UniProtKB-UniRule"/>
</dbReference>
<dbReference type="CDD" id="cd00364">
    <property type="entry name" value="Ribosomal_uS17"/>
    <property type="match status" value="1"/>
</dbReference>
<dbReference type="Gene3D" id="2.40.50.140">
    <property type="entry name" value="Nucleic acid-binding proteins"/>
    <property type="match status" value="1"/>
</dbReference>
<dbReference type="HAMAP" id="MF_01345_B">
    <property type="entry name" value="Ribosomal_uS17_B"/>
    <property type="match status" value="1"/>
</dbReference>
<dbReference type="InterPro" id="IPR012340">
    <property type="entry name" value="NA-bd_OB-fold"/>
</dbReference>
<dbReference type="InterPro" id="IPR000266">
    <property type="entry name" value="Ribosomal_uS17"/>
</dbReference>
<dbReference type="InterPro" id="IPR019984">
    <property type="entry name" value="Ribosomal_uS17_bact/chlr"/>
</dbReference>
<dbReference type="NCBIfam" id="NF004123">
    <property type="entry name" value="PRK05610.1"/>
    <property type="match status" value="1"/>
</dbReference>
<dbReference type="NCBIfam" id="TIGR03635">
    <property type="entry name" value="uS17_bact"/>
    <property type="match status" value="1"/>
</dbReference>
<dbReference type="PANTHER" id="PTHR10744">
    <property type="entry name" value="40S RIBOSOMAL PROTEIN S11 FAMILY MEMBER"/>
    <property type="match status" value="1"/>
</dbReference>
<dbReference type="PANTHER" id="PTHR10744:SF1">
    <property type="entry name" value="SMALL RIBOSOMAL SUBUNIT PROTEIN US17M"/>
    <property type="match status" value="1"/>
</dbReference>
<dbReference type="Pfam" id="PF00366">
    <property type="entry name" value="Ribosomal_S17"/>
    <property type="match status" value="1"/>
</dbReference>
<dbReference type="PRINTS" id="PR00973">
    <property type="entry name" value="RIBOSOMALS17"/>
</dbReference>
<dbReference type="SUPFAM" id="SSF50249">
    <property type="entry name" value="Nucleic acid-binding proteins"/>
    <property type="match status" value="1"/>
</dbReference>
<reference key="1">
    <citation type="journal article" date="2005" name="J. Bacteriol.">
        <title>Swine and poultry pathogens: the complete genome sequences of two strains of Mycoplasma hyopneumoniae and a strain of Mycoplasma synoviae.</title>
        <authorList>
            <person name="Vasconcelos A.T.R."/>
            <person name="Ferreira H.B."/>
            <person name="Bizarro C.V."/>
            <person name="Bonatto S.L."/>
            <person name="Carvalho M.O."/>
            <person name="Pinto P.M."/>
            <person name="Almeida D.F."/>
            <person name="Almeida L.G.P."/>
            <person name="Almeida R."/>
            <person name="Alves-Junior L."/>
            <person name="Assuncao E.N."/>
            <person name="Azevedo V.A.C."/>
            <person name="Bogo M.R."/>
            <person name="Brigido M.M."/>
            <person name="Brocchi M."/>
            <person name="Burity H.A."/>
            <person name="Camargo A.A."/>
            <person name="Camargo S.S."/>
            <person name="Carepo M.S."/>
            <person name="Carraro D.M."/>
            <person name="de Mattos Cascardo J.C."/>
            <person name="Castro L.A."/>
            <person name="Cavalcanti G."/>
            <person name="Chemale G."/>
            <person name="Collevatti R.G."/>
            <person name="Cunha C.W."/>
            <person name="Dallagiovanna B."/>
            <person name="Dambros B.P."/>
            <person name="Dellagostin O.A."/>
            <person name="Falcao C."/>
            <person name="Fantinatti-Garboggini F."/>
            <person name="Felipe M.S.S."/>
            <person name="Fiorentin L."/>
            <person name="Franco G.R."/>
            <person name="Freitas N.S.A."/>
            <person name="Frias D."/>
            <person name="Grangeiro T.B."/>
            <person name="Grisard E.C."/>
            <person name="Guimaraes C.T."/>
            <person name="Hungria M."/>
            <person name="Jardim S.N."/>
            <person name="Krieger M.A."/>
            <person name="Laurino J.P."/>
            <person name="Lima L.F.A."/>
            <person name="Lopes M.I."/>
            <person name="Loreto E.L.S."/>
            <person name="Madeira H.M.F."/>
            <person name="Manfio G.P."/>
            <person name="Maranhao A.Q."/>
            <person name="Martinkovics C.T."/>
            <person name="Medeiros S.R.B."/>
            <person name="Moreira M.A.M."/>
            <person name="Neiva M."/>
            <person name="Ramalho-Neto C.E."/>
            <person name="Nicolas M.F."/>
            <person name="Oliveira S.C."/>
            <person name="Paixao R.F.C."/>
            <person name="Pedrosa F.O."/>
            <person name="Pena S.D.J."/>
            <person name="Pereira M."/>
            <person name="Pereira-Ferrari L."/>
            <person name="Piffer I."/>
            <person name="Pinto L.S."/>
            <person name="Potrich D.P."/>
            <person name="Salim A.C.M."/>
            <person name="Santos F.R."/>
            <person name="Schmitt R."/>
            <person name="Schneider M.P.C."/>
            <person name="Schrank A."/>
            <person name="Schrank I.S."/>
            <person name="Schuck A.F."/>
            <person name="Seuanez H.N."/>
            <person name="Silva D.W."/>
            <person name="Silva R."/>
            <person name="Silva S.C."/>
            <person name="Soares C.M.A."/>
            <person name="Souza K.R.L."/>
            <person name="Souza R.C."/>
            <person name="Staats C.C."/>
            <person name="Steffens M.B.R."/>
            <person name="Teixeira S.M.R."/>
            <person name="Urmenyi T.P."/>
            <person name="Vainstein M.H."/>
            <person name="Zuccherato L.W."/>
            <person name="Simpson A.J.G."/>
            <person name="Zaha A."/>
        </authorList>
    </citation>
    <scope>NUCLEOTIDE SEQUENCE [LARGE SCALE GENOMIC DNA]</scope>
    <source>
        <strain>53</strain>
    </source>
</reference>
<gene>
    <name evidence="1" type="primary">rpsQ</name>
    <name type="ordered locus">MS53_0634</name>
</gene>
<protein>
    <recommendedName>
        <fullName evidence="1">Small ribosomal subunit protein uS17</fullName>
    </recommendedName>
    <alternativeName>
        <fullName evidence="2">30S ribosomal protein S17</fullName>
    </alternativeName>
</protein>
<proteinExistence type="inferred from homology"/>
<keyword id="KW-1185">Reference proteome</keyword>
<keyword id="KW-0687">Ribonucleoprotein</keyword>
<keyword id="KW-0689">Ribosomal protein</keyword>
<keyword id="KW-0694">RNA-binding</keyword>
<keyword id="KW-0699">rRNA-binding</keyword>
<feature type="chain" id="PRO_0000233515" description="Small ribosomal subunit protein uS17">
    <location>
        <begin position="1"/>
        <end position="95"/>
    </location>
</feature>
<sequence>MTFENRNNRKTLTGKVVSAQKTQKTIIVEVDRYKKHLLYGKRFKKTKRYAVHDEAQVAKVNDMVMIMETRPLSKTKHFRLYQVLSTASDVEKEAK</sequence>